<comment type="catalytic activity">
    <reaction evidence="1">
        <text>L-citrulline + L-aspartate + ATP = 2-(N(omega)-L-arginino)succinate + AMP + diphosphate + H(+)</text>
        <dbReference type="Rhea" id="RHEA:10932"/>
        <dbReference type="ChEBI" id="CHEBI:15378"/>
        <dbReference type="ChEBI" id="CHEBI:29991"/>
        <dbReference type="ChEBI" id="CHEBI:30616"/>
        <dbReference type="ChEBI" id="CHEBI:33019"/>
        <dbReference type="ChEBI" id="CHEBI:57472"/>
        <dbReference type="ChEBI" id="CHEBI:57743"/>
        <dbReference type="ChEBI" id="CHEBI:456215"/>
        <dbReference type="EC" id="6.3.4.5"/>
    </reaction>
</comment>
<comment type="pathway">
    <text evidence="1">Amino-acid biosynthesis; L-arginine biosynthesis; L-arginine from L-ornithine and carbamoyl phosphate: step 2/3.</text>
</comment>
<comment type="subunit">
    <text evidence="1">Homotetramer.</text>
</comment>
<comment type="subcellular location">
    <subcellularLocation>
        <location evidence="1">Cytoplasm</location>
    </subcellularLocation>
</comment>
<comment type="similarity">
    <text evidence="1">Belongs to the argininosuccinate synthase family. Type 1 subfamily.</text>
</comment>
<evidence type="ECO:0000255" key="1">
    <source>
        <dbReference type="HAMAP-Rule" id="MF_00005"/>
    </source>
</evidence>
<protein>
    <recommendedName>
        <fullName evidence="1">Argininosuccinate synthase</fullName>
        <ecNumber evidence="1">6.3.4.5</ecNumber>
    </recommendedName>
    <alternativeName>
        <fullName evidence="1">Citrulline--aspartate ligase</fullName>
    </alternativeName>
</protein>
<dbReference type="EC" id="6.3.4.5" evidence="1"/>
<dbReference type="EMBL" id="CP000850">
    <property type="protein sequence ID" value="ABV97772.1"/>
    <property type="molecule type" value="Genomic_DNA"/>
</dbReference>
<dbReference type="SMR" id="A8LYQ9"/>
<dbReference type="STRING" id="391037.Sare_1887"/>
<dbReference type="KEGG" id="saq:Sare_1887"/>
<dbReference type="PATRIC" id="fig|391037.6.peg.1915"/>
<dbReference type="eggNOG" id="COG0137">
    <property type="taxonomic scope" value="Bacteria"/>
</dbReference>
<dbReference type="HOGENOM" id="CLU_032784_4_2_11"/>
<dbReference type="OrthoDB" id="9801641at2"/>
<dbReference type="UniPathway" id="UPA00068">
    <property type="reaction ID" value="UER00113"/>
</dbReference>
<dbReference type="GO" id="GO:0005737">
    <property type="term" value="C:cytoplasm"/>
    <property type="evidence" value="ECO:0007669"/>
    <property type="project" value="UniProtKB-SubCell"/>
</dbReference>
<dbReference type="GO" id="GO:0004055">
    <property type="term" value="F:argininosuccinate synthase activity"/>
    <property type="evidence" value="ECO:0007669"/>
    <property type="project" value="UniProtKB-UniRule"/>
</dbReference>
<dbReference type="GO" id="GO:0005524">
    <property type="term" value="F:ATP binding"/>
    <property type="evidence" value="ECO:0007669"/>
    <property type="project" value="UniProtKB-UniRule"/>
</dbReference>
<dbReference type="GO" id="GO:0000053">
    <property type="term" value="P:argininosuccinate metabolic process"/>
    <property type="evidence" value="ECO:0007669"/>
    <property type="project" value="TreeGrafter"/>
</dbReference>
<dbReference type="GO" id="GO:0006526">
    <property type="term" value="P:L-arginine biosynthetic process"/>
    <property type="evidence" value="ECO:0007669"/>
    <property type="project" value="UniProtKB-UniRule"/>
</dbReference>
<dbReference type="GO" id="GO:0000050">
    <property type="term" value="P:urea cycle"/>
    <property type="evidence" value="ECO:0007669"/>
    <property type="project" value="TreeGrafter"/>
</dbReference>
<dbReference type="CDD" id="cd01999">
    <property type="entry name" value="ASS"/>
    <property type="match status" value="1"/>
</dbReference>
<dbReference type="FunFam" id="3.40.50.620:FF:000038">
    <property type="entry name" value="Argininosuccinate synthase"/>
    <property type="match status" value="1"/>
</dbReference>
<dbReference type="FunFam" id="3.90.1260.10:FF:000007">
    <property type="entry name" value="Argininosuccinate synthase"/>
    <property type="match status" value="1"/>
</dbReference>
<dbReference type="Gene3D" id="3.90.1260.10">
    <property type="entry name" value="Argininosuccinate synthetase, chain A, domain 2"/>
    <property type="match status" value="1"/>
</dbReference>
<dbReference type="Gene3D" id="3.40.50.620">
    <property type="entry name" value="HUPs"/>
    <property type="match status" value="1"/>
</dbReference>
<dbReference type="Gene3D" id="1.20.5.470">
    <property type="entry name" value="Single helix bin"/>
    <property type="match status" value="1"/>
</dbReference>
<dbReference type="HAMAP" id="MF_00005">
    <property type="entry name" value="Arg_succ_synth_type1"/>
    <property type="match status" value="1"/>
</dbReference>
<dbReference type="InterPro" id="IPR048268">
    <property type="entry name" value="Arginosuc_syn_C"/>
</dbReference>
<dbReference type="InterPro" id="IPR048267">
    <property type="entry name" value="Arginosuc_syn_N"/>
</dbReference>
<dbReference type="InterPro" id="IPR001518">
    <property type="entry name" value="Arginosuc_synth"/>
</dbReference>
<dbReference type="InterPro" id="IPR018223">
    <property type="entry name" value="Arginosuc_synth_CS"/>
</dbReference>
<dbReference type="InterPro" id="IPR023434">
    <property type="entry name" value="Arginosuc_synth_type_1_subfam"/>
</dbReference>
<dbReference type="InterPro" id="IPR024074">
    <property type="entry name" value="AS_cat/multimer_dom_body"/>
</dbReference>
<dbReference type="InterPro" id="IPR014729">
    <property type="entry name" value="Rossmann-like_a/b/a_fold"/>
</dbReference>
<dbReference type="NCBIfam" id="TIGR00032">
    <property type="entry name" value="argG"/>
    <property type="match status" value="1"/>
</dbReference>
<dbReference type="NCBIfam" id="NF001770">
    <property type="entry name" value="PRK00509.1"/>
    <property type="match status" value="1"/>
</dbReference>
<dbReference type="PANTHER" id="PTHR11587">
    <property type="entry name" value="ARGININOSUCCINATE SYNTHASE"/>
    <property type="match status" value="1"/>
</dbReference>
<dbReference type="PANTHER" id="PTHR11587:SF2">
    <property type="entry name" value="ARGININOSUCCINATE SYNTHASE"/>
    <property type="match status" value="1"/>
</dbReference>
<dbReference type="Pfam" id="PF20979">
    <property type="entry name" value="Arginosuc_syn_C"/>
    <property type="match status" value="1"/>
</dbReference>
<dbReference type="Pfam" id="PF00764">
    <property type="entry name" value="Arginosuc_synth"/>
    <property type="match status" value="1"/>
</dbReference>
<dbReference type="SUPFAM" id="SSF52402">
    <property type="entry name" value="Adenine nucleotide alpha hydrolases-like"/>
    <property type="match status" value="1"/>
</dbReference>
<dbReference type="SUPFAM" id="SSF69864">
    <property type="entry name" value="Argininosuccinate synthetase, C-terminal domain"/>
    <property type="match status" value="1"/>
</dbReference>
<dbReference type="PROSITE" id="PS00564">
    <property type="entry name" value="ARGININOSUCCIN_SYN_1"/>
    <property type="match status" value="1"/>
</dbReference>
<dbReference type="PROSITE" id="PS00565">
    <property type="entry name" value="ARGININOSUCCIN_SYN_2"/>
    <property type="match status" value="1"/>
</dbReference>
<reference key="1">
    <citation type="submission" date="2007-10" db="EMBL/GenBank/DDBJ databases">
        <title>Complete sequence of Salinispora arenicola CNS-205.</title>
        <authorList>
            <consortium name="US DOE Joint Genome Institute"/>
            <person name="Copeland A."/>
            <person name="Lucas S."/>
            <person name="Lapidus A."/>
            <person name="Barry K."/>
            <person name="Glavina del Rio T."/>
            <person name="Dalin E."/>
            <person name="Tice H."/>
            <person name="Pitluck S."/>
            <person name="Foster B."/>
            <person name="Schmutz J."/>
            <person name="Larimer F."/>
            <person name="Land M."/>
            <person name="Hauser L."/>
            <person name="Kyrpides N."/>
            <person name="Ivanova N."/>
            <person name="Jensen P.R."/>
            <person name="Moore B.S."/>
            <person name="Penn K."/>
            <person name="Jenkins C."/>
            <person name="Udwary D."/>
            <person name="Xiang L."/>
            <person name="Gontang E."/>
            <person name="Richardson P."/>
        </authorList>
    </citation>
    <scope>NUCLEOTIDE SEQUENCE [LARGE SCALE GENOMIC DNA]</scope>
    <source>
        <strain>CNS-205</strain>
    </source>
</reference>
<gene>
    <name evidence="1" type="primary">argG</name>
    <name type="ordered locus">Sare_1887</name>
</gene>
<accession>A8LYQ9</accession>
<sequence length="403" mass="43450">MTERVVLAYSGGLDTSVAIPYLAEQTGAEVIAVAVDVGQGGEDLDAIRQRALDCGAVESEVVDARDEFAAEYCLPAVRANSLYMDRYPLVSALSRPLIVKHLVAAARTHGGTIVSHGCTGKGNDQVRFEAGLGALAPDLRIVAPARDFAWTRDKAIAFAEEKGLPIDVTAKSPYSIDQNLWGRAVETGFLEDIWNPPIEDLYAYTADPAEPRDADEVVITFDAGNPVAIDGETVTPYQAIVELNRRAGAQGVGRLDMVEDRLVGIKSREVYEAPGAIALIAAHQELEAVTVERDLARFKRGVDQRWGELVYDGLWFSPLRAALDAFVNDAQQHVSGDVRLTLHGGRATVTGRRSEASLYDFGLATYDTGDTFDQSLAKGFVQLWGLPSKMSAARDARLGGAQS</sequence>
<name>ASSY_SALAI</name>
<keyword id="KW-0028">Amino-acid biosynthesis</keyword>
<keyword id="KW-0055">Arginine biosynthesis</keyword>
<keyword id="KW-0067">ATP-binding</keyword>
<keyword id="KW-0963">Cytoplasm</keyword>
<keyword id="KW-0436">Ligase</keyword>
<keyword id="KW-0547">Nucleotide-binding</keyword>
<proteinExistence type="inferred from homology"/>
<feature type="chain" id="PRO_1000073828" description="Argininosuccinate synthase">
    <location>
        <begin position="1"/>
        <end position="403"/>
    </location>
</feature>
<feature type="binding site" evidence="1">
    <location>
        <begin position="8"/>
        <end position="16"/>
    </location>
    <ligand>
        <name>ATP</name>
        <dbReference type="ChEBI" id="CHEBI:30616"/>
    </ligand>
</feature>
<feature type="binding site" evidence="1">
    <location>
        <position position="87"/>
    </location>
    <ligand>
        <name>L-citrulline</name>
        <dbReference type="ChEBI" id="CHEBI:57743"/>
    </ligand>
</feature>
<feature type="binding site" evidence="1">
    <location>
        <position position="117"/>
    </location>
    <ligand>
        <name>ATP</name>
        <dbReference type="ChEBI" id="CHEBI:30616"/>
    </ligand>
</feature>
<feature type="binding site" evidence="1">
    <location>
        <position position="119"/>
    </location>
    <ligand>
        <name>L-aspartate</name>
        <dbReference type="ChEBI" id="CHEBI:29991"/>
    </ligand>
</feature>
<feature type="binding site" evidence="1">
    <location>
        <position position="123"/>
    </location>
    <ligand>
        <name>L-aspartate</name>
        <dbReference type="ChEBI" id="CHEBI:29991"/>
    </ligand>
</feature>
<feature type="binding site" evidence="1">
    <location>
        <position position="123"/>
    </location>
    <ligand>
        <name>L-citrulline</name>
        <dbReference type="ChEBI" id="CHEBI:57743"/>
    </ligand>
</feature>
<feature type="binding site" evidence="1">
    <location>
        <position position="124"/>
    </location>
    <ligand>
        <name>L-aspartate</name>
        <dbReference type="ChEBI" id="CHEBI:29991"/>
    </ligand>
</feature>
<feature type="binding site" evidence="1">
    <location>
        <position position="127"/>
    </location>
    <ligand>
        <name>L-citrulline</name>
        <dbReference type="ChEBI" id="CHEBI:57743"/>
    </ligand>
</feature>
<feature type="binding site" evidence="1">
    <location>
        <position position="175"/>
    </location>
    <ligand>
        <name>L-citrulline</name>
        <dbReference type="ChEBI" id="CHEBI:57743"/>
    </ligand>
</feature>
<feature type="binding site" evidence="1">
    <location>
        <position position="259"/>
    </location>
    <ligand>
        <name>L-citrulline</name>
        <dbReference type="ChEBI" id="CHEBI:57743"/>
    </ligand>
</feature>
<feature type="binding site" evidence="1">
    <location>
        <position position="271"/>
    </location>
    <ligand>
        <name>L-citrulline</name>
        <dbReference type="ChEBI" id="CHEBI:57743"/>
    </ligand>
</feature>
<organism>
    <name type="scientific">Salinispora arenicola (strain CNS-205)</name>
    <dbReference type="NCBI Taxonomy" id="391037"/>
    <lineage>
        <taxon>Bacteria</taxon>
        <taxon>Bacillati</taxon>
        <taxon>Actinomycetota</taxon>
        <taxon>Actinomycetes</taxon>
        <taxon>Micromonosporales</taxon>
        <taxon>Micromonosporaceae</taxon>
        <taxon>Salinispora</taxon>
    </lineage>
</organism>